<keyword id="KW-0002">3D-structure</keyword>
<keyword id="KW-0025">Alternative splicing</keyword>
<keyword id="KW-0119">Carbohydrate metabolism</keyword>
<keyword id="KW-0165">Cleavage on pair of basic residues</keyword>
<keyword id="KW-0903">Direct protein sequencing</keyword>
<keyword id="KW-0225">Disease variant</keyword>
<keyword id="KW-1015">Disulfide bond</keyword>
<keyword id="KW-0242">Dwarfism</keyword>
<keyword id="KW-0313">Glucose metabolism</keyword>
<keyword id="KW-0325">Glycoprotein</keyword>
<keyword id="KW-0339">Growth factor</keyword>
<keyword id="KW-0372">Hormone</keyword>
<keyword id="KW-0497">Mitogen</keyword>
<keyword id="KW-0892">Osteogenesis</keyword>
<keyword id="KW-1267">Proteomics identification</keyword>
<keyword id="KW-1185">Reference proteome</keyword>
<keyword id="KW-0964">Secreted</keyword>
<keyword id="KW-0732">Signal</keyword>
<name>IGF2_HUMAN</name>
<feature type="signal peptide" evidence="19 20">
    <location>
        <begin position="1"/>
        <end position="24"/>
    </location>
</feature>
<feature type="chain" id="PRO_0000015717" description="Insulin-like growth factor 2">
    <location>
        <begin position="25"/>
        <end position="91"/>
    </location>
</feature>
<feature type="chain" id="PRO_0000015718" description="Insulin-like growth factor II Ala-25 Del">
    <location>
        <begin position="26"/>
        <end position="91"/>
    </location>
</feature>
<feature type="propeptide" id="PRO_0000015719" description="E peptide">
    <location>
        <begin position="92"/>
        <end position="180"/>
    </location>
</feature>
<feature type="peptide" id="PRO_0000370376" description="Preptin">
    <location>
        <begin position="93"/>
        <end position="126"/>
    </location>
</feature>
<feature type="region of interest" description="B">
    <location>
        <begin position="25"/>
        <end position="52"/>
    </location>
</feature>
<feature type="region of interest" description="C">
    <location>
        <begin position="53"/>
        <end position="64"/>
    </location>
</feature>
<feature type="region of interest" description="A">
    <location>
        <begin position="65"/>
        <end position="85"/>
    </location>
</feature>
<feature type="region of interest" description="D">
    <location>
        <begin position="86"/>
        <end position="91"/>
    </location>
</feature>
<feature type="region of interest" description="Disordered" evidence="2">
    <location>
        <begin position="161"/>
        <end position="180"/>
    </location>
</feature>
<feature type="site" description="Important for interaction with integrin" evidence="18">
    <location>
        <position position="48"/>
    </location>
</feature>
<feature type="site" description="Important for interaction with integrin" evidence="18">
    <location>
        <position position="58"/>
    </location>
</feature>
<feature type="site" description="Important for interaction with integrin" evidence="18">
    <location>
        <position position="61"/>
    </location>
</feature>
<feature type="site" description="Important for interaction with integrin" evidence="18">
    <location>
        <position position="62"/>
    </location>
</feature>
<feature type="glycosylation site" description="O-linked (GalNAc...) threonine" evidence="13 14">
    <location>
        <position position="96"/>
    </location>
</feature>
<feature type="glycosylation site" description="O-linked (GalNAc...) threonine" evidence="6 13">
    <location>
        <position position="99"/>
    </location>
</feature>
<feature type="glycosylation site" description="O-linked (GalNAc...) threonine" evidence="12 13">
    <location>
        <position position="163"/>
    </location>
</feature>
<feature type="disulfide bond" evidence="16">
    <location>
        <begin position="33"/>
        <end position="71"/>
    </location>
</feature>
<feature type="disulfide bond" evidence="16">
    <location>
        <begin position="45"/>
        <end position="84"/>
    </location>
</feature>
<feature type="disulfide bond" evidence="16">
    <location>
        <begin position="70"/>
        <end position="75"/>
    </location>
</feature>
<feature type="splice variant" id="VSP_045624" description="In isoform 3." evidence="23">
    <original>M</original>
    <variation>MVSPDPQIIVVAPETELASMQVQRTEDGVTIIQIFWVGRKGELLRRTPVSSAMQTPM</variation>
    <location>
        <position position="1"/>
    </location>
</feature>
<feature type="splice variant" id="VSP_002708" description="In isoform 2." evidence="24 25">
    <original>S</original>
    <variation>RLPG</variation>
    <location>
        <position position="53"/>
    </location>
</feature>
<feature type="sequence variant" id="VAR_084336" description="In SRS3." evidence="17">
    <location>
        <begin position="26"/>
        <end position="180"/>
    </location>
</feature>
<feature type="sequence variant" id="VAR_011959" description="In dbSNP:rs14367.">
    <original>K</original>
    <variation>N</variation>
    <location>
        <position position="120"/>
    </location>
</feature>
<feature type="sequence variant" id="VAR_011960" description="In dbSNP:rs1050342.">
    <original>P</original>
    <variation>Q</variation>
    <location>
        <position position="173"/>
    </location>
</feature>
<feature type="sequence variant" id="VAR_011961" description="In dbSNP:rs12993.">
    <original>K</original>
    <variation>N</variation>
    <location>
        <position position="180"/>
    </location>
</feature>
<feature type="mutagenesis site" description="Does not affect integrin binding. Defective integrin binding and IGF2 signaling; when associated with E-58; E-61 and E-62." evidence="18">
    <original>R</original>
    <variation>E</variation>
    <location>
        <position position="48"/>
    </location>
</feature>
<feature type="mutagenesis site" description="Does not affect integrin binding. Defective integrin binding and IGF2 signaling; when associated with E-48; E-61 and E-62." evidence="18">
    <original>R</original>
    <variation>E</variation>
    <location>
        <position position="58"/>
    </location>
</feature>
<feature type="mutagenesis site" description="Does not affect integrin binding. Defective integrin binding and IGF2 signaling; when associated with E-48; E-58 and E-62." evidence="18">
    <original>R</original>
    <variation>E</variation>
    <location>
        <position position="61"/>
    </location>
</feature>
<feature type="mutagenesis site" description="Does not affect integrin binding. Defective integrin binding and IGF2 signaling; when associated with E-48; E-58 and E-61." evidence="18">
    <original>R</original>
    <variation>E</variation>
    <location>
        <position position="62"/>
    </location>
</feature>
<feature type="mutagenesis site" description="Slight but significant increase in integrin binding." evidence="18">
    <original>R</original>
    <variation>E</variation>
    <location>
        <position position="64"/>
    </location>
</feature>
<feature type="mutagenesis site" description="Decreases mature IGF2 levels." evidence="7">
    <original>R</original>
    <variation>A</variation>
    <location>
        <position position="92"/>
    </location>
</feature>
<feature type="mutagenesis site" description="No effect in proteolytical processing." evidence="7">
    <original>K</original>
    <variation>A</variation>
    <location>
        <position position="112"/>
    </location>
</feature>
<feature type="mutagenesis site" description="Abolishes proteolytical processing." evidence="7">
    <original>R</original>
    <variation>A</variation>
    <location>
        <position position="128"/>
    </location>
</feature>
<feature type="sequence conflict" description="In Ref. 6; AAA52544." evidence="27" ref="6">
    <original>I</original>
    <variation>M</variation>
    <location>
        <position position="3"/>
    </location>
</feature>
<feature type="sequence conflict" description="In Ref. 1; CAA27249." evidence="27" ref="1">
    <original>RYPV</original>
    <variation>EIPL</variation>
    <location>
        <begin position="107"/>
        <end position="110"/>
    </location>
</feature>
<feature type="sequence conflict" description="In Ref. 5; AAA60088." evidence="27" ref="5">
    <original>E</original>
    <variation>ELE</variation>
    <location>
        <position position="147"/>
    </location>
</feature>
<feature type="helix" evidence="32">
    <location>
        <begin position="34"/>
        <end position="44"/>
    </location>
</feature>
<feature type="turn" evidence="32">
    <location>
        <begin position="45"/>
        <end position="48"/>
    </location>
</feature>
<feature type="strand" evidence="32">
    <location>
        <begin position="50"/>
        <end position="52"/>
    </location>
</feature>
<feature type="helix" evidence="32">
    <location>
        <begin position="55"/>
        <end position="58"/>
    </location>
</feature>
<feature type="helix" evidence="32">
    <location>
        <begin position="61"/>
        <end position="72"/>
    </location>
</feature>
<feature type="helix" evidence="32">
    <location>
        <begin position="77"/>
        <end position="82"/>
    </location>
</feature>
<feature type="strand" evidence="31">
    <location>
        <begin position="86"/>
        <end position="88"/>
    </location>
</feature>
<gene>
    <name evidence="30" type="primary">IGF2</name>
    <name evidence="21" type="synonym">IGF-2</name>
    <name type="ORF">PP1446</name>
</gene>
<comment type="function">
    <text evidence="1 18 29">The insulin-like growth factors possess growth-promoting activity (By similarity). Major fetal growth hormone in mammals. Plays a key role in regulating fetoplacental development. IGF2 is influenced by placental lactogen. Also involved in tissue differentiation. In adults, involved in glucose metabolism in adipose tissue, skeletal muscle and liver (Probable). Acts as a ligand for integrin which is required for IGF2 signaling (PubMed:28873464). Positively regulates myogenic transcription factor MYOD1 function by facilitating the recruitment of transcriptional coactivators, thereby controlling muscle terminal differentiation (By similarity). Inhibits myoblast differentiation and modulates metabolism via increasing the mitochondrial respiration rate (By similarity).</text>
</comment>
<comment type="function">
    <text evidence="9">Preptin undergoes glucose-mediated co-secretion with insulin, and acts as a physiological amplifier of glucose-mediated insulin secretion. Exhibits osteogenic properties by increasing osteoblast mitogenic activity through phosphoactivation of MAPK1 and MAPK3.</text>
</comment>
<comment type="subunit">
    <text evidence="1 10 18">Interacts with MYORG; this interaction is required for IGF2 secretion (By similarity). Interacts with integrins ITGAV:ITGB3 and ITGA6:ITGB4; integrin-binding is required for IGF2 signaling (PubMed:28873464). Interacts with IGFBP2 (PubMed:18563800).</text>
</comment>
<comment type="interaction">
    <interactant intactId="EBI-7178764">
        <id>P01344</id>
    </interactant>
    <interactant intactId="EBI-1048580">
        <id>P11717</id>
        <label>IGF2R</label>
    </interactant>
    <organismsDiffer>false</organismsDiffer>
    <experiments>17</experiments>
</comment>
<comment type="interaction">
    <interactant intactId="EBI-7178764">
        <id>P01344</id>
    </interactant>
    <interactant intactId="EBI-740322">
        <id>Q93062</id>
        <label>RBPMS</label>
    </interactant>
    <organismsDiffer>false</organismsDiffer>
    <experiments>3</experiments>
</comment>
<comment type="interaction">
    <interactant intactId="EBI-15658078">
        <id>P01344-1</id>
    </interactant>
    <interactant intactId="EBI-1048580">
        <id>P11717</id>
        <label>IGF2R</label>
    </interactant>
    <organismsDiffer>false</organismsDiffer>
    <experiments>2</experiments>
</comment>
<comment type="interaction">
    <interactant intactId="EBI-13334485">
        <id>P01344-3</id>
    </interactant>
    <interactant intactId="EBI-1043514">
        <id>O75503</id>
        <label>CLN5</label>
    </interactant>
    <organismsDiffer>false</organismsDiffer>
    <experiments>3</experiments>
</comment>
<comment type="interaction">
    <interactant intactId="EBI-13334485">
        <id>P01344-3</id>
    </interactant>
    <interactant intactId="EBI-13345167">
        <id>Q8TDT2</id>
        <label>GPR152</label>
    </interactant>
    <organismsDiffer>false</organismsDiffer>
    <experiments>3</experiments>
</comment>
<comment type="interaction">
    <interactant intactId="EBI-13334485">
        <id>P01344-3</id>
    </interactant>
    <interactant intactId="EBI-2831948">
        <id>P22692</id>
        <label>IGFBP4</label>
    </interactant>
    <organismsDiffer>false</organismsDiffer>
    <experiments>4</experiments>
</comment>
<comment type="subcellular location">
    <subcellularLocation>
        <location evidence="7">Secreted</location>
    </subcellularLocation>
</comment>
<comment type="alternative products">
    <event type="alternative splicing"/>
    <isoform>
        <id>P01344-1</id>
        <name>1</name>
        <sequence type="displayed"/>
    </isoform>
    <isoform>
        <id>P01344-2</id>
        <name>2</name>
        <sequence type="described" ref="VSP_002708"/>
    </isoform>
    <isoform>
        <id>P01344-3</id>
        <name>3</name>
        <sequence type="described" ref="VSP_045624"/>
    </isoform>
</comment>
<comment type="tissue specificity">
    <text evidence="8">Expressed in heart, placenta, lung, liver, muscle, kidney, tongue, limb, eye and pancreas.</text>
</comment>
<comment type="developmental stage">
    <text evidence="8">During embryogenesis, detected in liver, lung, skeletal muscle and placenta.</text>
</comment>
<comment type="PTM">
    <text evidence="6 12 13 14">O-glycosylated with core 1 or possibly core 8 glycans. Thr-96 is a minor glycosylation site compared to Thr-99.</text>
</comment>
<comment type="PTM">
    <text evidence="7">Proteolytically processed by PCSK4, proIGF2 is cleaved at Arg-128 and Arg-92 to generate big-IGF2 and mature IGF2.</text>
</comment>
<comment type="mass spectrometry">
    <molecule>Insulin-like growth factor 2</molecule>
</comment>
<comment type="mass spectrometry">
    <molecule>Insulin-like growth factor II Ala-25 Del</molecule>
</comment>
<comment type="polymorphism">
    <text evidence="3">Genetic variations in IGF2 are associated with body mass index (BMI). The BMI is a statistical measurement which compares a person's weight and height.</text>
</comment>
<comment type="disease" evidence="11">
    <disease id="DI-02493">
        <name>Silver-Russell syndrome 1</name>
        <acronym>SRS1</acronym>
        <description>A form of Silver-Russell syndrome, a clinically heterogeneous condition characterized by severe intrauterine growth retardation, poor postnatal growth, craniofacial features such as a triangular shaped face and a broad forehead, body asymmetry, and a variety of minor malformations. The phenotypic expression changes during childhood and adolescence, with the facial features and asymmetry usually becoming more subtle with age. SRS1 is caused by epigenetic changes of DNA hypomethylation at the telomeric imprinting control region (ICR1) on chromosome 11p15, involving the H19 and IGF2 genes.</description>
        <dbReference type="MIM" id="180860"/>
    </disease>
    <text>The gene represented in this entry is involved in disease pathogenesis.</text>
</comment>
<comment type="disease" evidence="15 17">
    <disease id="DI-04494">
        <name>Silver-Russell syndrome 3</name>
        <acronym>SRS3</acronym>
        <description>A form of Silver-Russell syndrome, a clinically heterogeneous condition characterized by severe intrauterine growth retardation, poor postnatal growth, craniofacial features such as a triangular shaped face and a broad forehead, body asymmetry, and a variety of minor malformations. The phenotypic expression changes during childhood and adolescence, with the facial features and asymmetry usually becoming more subtle with age. SRS3 inheritance is autosomal dominant.</description>
        <dbReference type="MIM" id="616489"/>
    </disease>
    <text>The disease is caused by variants affecting the gene represented in this entry.</text>
</comment>
<comment type="miscellaneous">
    <text evidence="28">The IGF2 locus is imprinted. Paternal inherited gene is expressed, while the maternal inherited gene is imprinted, hence silenced. Transcripts from 5 promoters P0, P1, P2, P3 and P4 code for the same protein but are differentially regulated in a developmental stage and tissue specificity.</text>
</comment>
<comment type="miscellaneous">
    <molecule>Isoform 1</molecule>
    <text evidence="28">Product of 5 different transcripts regulated by 5 different promoters, denominated P0, P1, P2, P3 and P4.</text>
</comment>
<comment type="similarity">
    <text evidence="27">Belongs to the insulin family.</text>
</comment>
<comment type="online information" name="Wikipedia">
    <link uri="https://en.wikipedia.org/wiki/Insulin-like_growth_factor_2"/>
    <text>Insulin-like growth factor 2 entry</text>
</comment>
<reference key="1">
    <citation type="journal article" date="1984" name="Nature">
        <title>Insulin-like growth factor II precursor gene organization in relation to insulin gene family.</title>
        <authorList>
            <person name="Dull T.J."/>
            <person name="Gray A."/>
            <person name="Hayflick J.S."/>
            <person name="Ullrich A."/>
        </authorList>
    </citation>
    <scope>NUCLEOTIDE SEQUENCE [GENOMIC DNA] (ISOFORM 1)</scope>
</reference>
<reference key="2">
    <citation type="journal article" date="1984" name="Nature">
        <title>Sequence of a cDNA clone encoding human preproinsulin-like growth factor II.</title>
        <authorList>
            <person name="Bell G.I."/>
            <person name="Merryweather J.P."/>
            <person name="Sanchez-Pescador R."/>
            <person name="Stempien M.M."/>
            <person name="Priestley L."/>
            <person name="Scott J."/>
            <person name="Rall L.B."/>
        </authorList>
    </citation>
    <scope>NUCLEOTIDE SEQUENCE [MRNA] (ISOFORM 1)</scope>
    <scope>TISSUE SPECIFICITY</scope>
    <scope>DEVELOPMENTAL STAGE</scope>
    <scope>MISCELLANEOUS</scope>
</reference>
<reference key="3">
    <citation type="journal article" date="1988" name="Proc. Natl. Acad. Sci. U.S.A.">
        <title>Isolation of an insulin-like growth factor II cDNA with a unique 5' untranslated region from human placenta.</title>
        <authorList>
            <person name="Shen S.-J."/>
            <person name="Daimon M."/>
            <person name="Wang C.-Y."/>
            <person name="Jansen M."/>
            <person name="Ilan J."/>
        </authorList>
    </citation>
    <scope>NUCLEOTIDE SEQUENCE [MRNA] (ISOFORM 1)</scope>
</reference>
<reference key="4">
    <citation type="journal article" date="1986" name="FEBS Lett.">
        <title>Organization of the human genes for insulin-like growth factors I and II.</title>
        <authorList>
            <person name="de Pagter-Holthuizen P."/>
            <person name="van Schaik F.M.A."/>
            <person name="Verduijn G.M."/>
            <person name="van Ommen G.J.B."/>
            <person name="Bouma B.N."/>
            <person name="Jansen M."/>
            <person name="Sussenbach J.S."/>
        </authorList>
    </citation>
    <scope>NUCLEOTIDE SEQUENCE [GENOMIC DNA] (ISOFORM 1)</scope>
</reference>
<reference key="5">
    <citation type="journal article" date="1987" name="Proc. Natl. Acad. Sci. U.S.A.">
        <title>Tissue-specific expression of insulin-like growth factor II mRNAs with distinct 5' untranslated regions.</title>
        <authorList>
            <person name="Irminger J.C."/>
            <person name="Rosen K.M."/>
            <person name="Humbel R.E."/>
            <person name="Villa-Komaroff L."/>
        </authorList>
    </citation>
    <scope>NUCLEOTIDE SEQUENCE [MRNA] (ISOFORM 1)</scope>
</reference>
<reference key="6">
    <citation type="journal article" date="1987" name="Methods Enzymol.">
        <title>Human insulin-like growth factor I and II messenger RNA: isolation of complementary DNA and analysis of expression.</title>
        <authorList>
            <person name="Rall L.B."/>
            <person name="Scott J."/>
            <person name="Bell G.I."/>
        </authorList>
    </citation>
    <scope>NUCLEOTIDE SEQUENCE [MRNA] (ISOFORM 1)</scope>
</reference>
<reference key="7">
    <citation type="journal article" date="1985" name="FEBS Lett.">
        <title>Nucleotide sequences of cDNAs encoding precursors of human insulin-like growth factor II (IGF-II) and an IGF-II variant.</title>
        <authorList>
            <person name="Jansen M."/>
            <person name="van Schaik F.M.A."/>
            <person name="van Tol H."/>
            <person name="van den Brande J.L."/>
            <person name="Sussenbach J.S."/>
        </authorList>
    </citation>
    <scope>NUCLEOTIDE SEQUENCE [MRNA] (ISOFORMS 1 AND 2)</scope>
</reference>
<reference key="8">
    <citation type="journal article" date="1995" name="Jpn. J. Cancer Res.">
        <title>Isolation of a cDNA for a growth factor of vascular endothelial cells from human lung cancer cells: its identity with insulin-like growth factor II.</title>
        <authorList>
            <person name="Hagiwara K."/>
            <person name="Kobayashi T."/>
            <person name="Tobita M."/>
            <person name="Kikyo N."/>
            <person name="Yazaki Y."/>
            <person name="Okabe T."/>
        </authorList>
    </citation>
    <scope>NUCLEOTIDE SEQUENCE [MRNA] (ISOFORM 1)</scope>
</reference>
<reference key="9">
    <citation type="journal article" date="2006" name="Hum. Mol. Genet.">
        <title>Imprinting of IGF2 P0 transcript and novel alternatively spliced INS-IGF2 isoforms show differences between mouse and human.</title>
        <authorList>
            <person name="Monk D."/>
            <person name="Sanches R."/>
            <person name="Arnaud P."/>
            <person name="Apostolidou S."/>
            <person name="Hills F.A."/>
            <person name="Abu-Amero S."/>
            <person name="Murrell A."/>
            <person name="Friess H."/>
            <person name="Reik W."/>
            <person name="Stanier P."/>
            <person name="Constancia M."/>
            <person name="Moore G.E."/>
        </authorList>
    </citation>
    <scope>NUCLEOTIDE SEQUENCE [MRNA] (ISOFORM 1)</scope>
</reference>
<reference key="10">
    <citation type="journal article" date="2011" name="Mol. Biol. Rep.">
        <title>Down-regulation of achaete-scute complex homolog 1 (ASCL1) in neuroblastoma cells induces up-regulation of insulin-like growth factor 2 (IGF2).</title>
        <authorList>
            <person name="Li J."/>
            <person name="Neumann I."/>
            <person name="Volkmer I."/>
            <person name="Staege M.S."/>
        </authorList>
    </citation>
    <scope>NUCLEOTIDE SEQUENCE [MRNA] OF 1-165 (ISOFORM 3)</scope>
    <scope>ALTERNATIVE SPLICING</scope>
</reference>
<reference key="11">
    <citation type="journal article" date="2004" name="Proc. Natl. Acad. Sci. U.S.A.">
        <title>Large-scale cDNA transfection screening for genes related to cancer development and progression.</title>
        <authorList>
            <person name="Wan D."/>
            <person name="Gong Y."/>
            <person name="Qin W."/>
            <person name="Zhang P."/>
            <person name="Li J."/>
            <person name="Wei L."/>
            <person name="Zhou X."/>
            <person name="Li H."/>
            <person name="Qiu X."/>
            <person name="Zhong F."/>
            <person name="He L."/>
            <person name="Yu J."/>
            <person name="Yao G."/>
            <person name="Jiang H."/>
            <person name="Qian L."/>
            <person name="Yu Y."/>
            <person name="Shu H."/>
            <person name="Chen X."/>
            <person name="Xu H."/>
            <person name="Guo M."/>
            <person name="Pan Z."/>
            <person name="Chen Y."/>
            <person name="Ge C."/>
            <person name="Yang S."/>
            <person name="Gu J."/>
        </authorList>
    </citation>
    <scope>NUCLEOTIDE SEQUENCE [LARGE SCALE MRNA] (ISOFORM 1)</scope>
</reference>
<reference key="12">
    <citation type="submission" date="2003-05" db="EMBL/GenBank/DDBJ databases">
        <title>Cloning of human full-length CDSs in BD Creator(TM) system donor vector.</title>
        <authorList>
            <person name="Kalnine N."/>
            <person name="Chen X."/>
            <person name="Rolfs A."/>
            <person name="Halleck A."/>
            <person name="Hines L."/>
            <person name="Eisenstein S."/>
            <person name="Koundinya M."/>
            <person name="Raphael J."/>
            <person name="Moreira D."/>
            <person name="Kelley T."/>
            <person name="LaBaer J."/>
            <person name="Lin Y."/>
            <person name="Phelan M."/>
            <person name="Farmer A."/>
        </authorList>
    </citation>
    <scope>NUCLEOTIDE SEQUENCE [LARGE SCALE MRNA] (ISOFORM 1)</scope>
</reference>
<reference key="13">
    <citation type="submission" date="2002-05" db="EMBL/GenBank/DDBJ databases">
        <authorList>
            <consortium name="SeattleSNPs variation discovery resource"/>
        </authorList>
    </citation>
    <scope>NUCLEOTIDE SEQUENCE [GENOMIC DNA]</scope>
</reference>
<reference key="14">
    <citation type="journal article" date="2004" name="Nat. Genet.">
        <title>Complete sequencing and characterization of 21,243 full-length human cDNAs.</title>
        <authorList>
            <person name="Ota T."/>
            <person name="Suzuki Y."/>
            <person name="Nishikawa T."/>
            <person name="Otsuki T."/>
            <person name="Sugiyama T."/>
            <person name="Irie R."/>
            <person name="Wakamatsu A."/>
            <person name="Hayashi K."/>
            <person name="Sato H."/>
            <person name="Nagai K."/>
            <person name="Kimura K."/>
            <person name="Makita H."/>
            <person name="Sekine M."/>
            <person name="Obayashi M."/>
            <person name="Nishi T."/>
            <person name="Shibahara T."/>
            <person name="Tanaka T."/>
            <person name="Ishii S."/>
            <person name="Yamamoto J."/>
            <person name="Saito K."/>
            <person name="Kawai Y."/>
            <person name="Isono Y."/>
            <person name="Nakamura Y."/>
            <person name="Nagahari K."/>
            <person name="Murakami K."/>
            <person name="Yasuda T."/>
            <person name="Iwayanagi T."/>
            <person name="Wagatsuma M."/>
            <person name="Shiratori A."/>
            <person name="Sudo H."/>
            <person name="Hosoiri T."/>
            <person name="Kaku Y."/>
            <person name="Kodaira H."/>
            <person name="Kondo H."/>
            <person name="Sugawara M."/>
            <person name="Takahashi M."/>
            <person name="Kanda K."/>
            <person name="Yokoi T."/>
            <person name="Furuya T."/>
            <person name="Kikkawa E."/>
            <person name="Omura Y."/>
            <person name="Abe K."/>
            <person name="Kamihara K."/>
            <person name="Katsuta N."/>
            <person name="Sato K."/>
            <person name="Tanikawa M."/>
            <person name="Yamazaki M."/>
            <person name="Ninomiya K."/>
            <person name="Ishibashi T."/>
            <person name="Yamashita H."/>
            <person name="Murakawa K."/>
            <person name="Fujimori K."/>
            <person name="Tanai H."/>
            <person name="Kimata M."/>
            <person name="Watanabe M."/>
            <person name="Hiraoka S."/>
            <person name="Chiba Y."/>
            <person name="Ishida S."/>
            <person name="Ono Y."/>
            <person name="Takiguchi S."/>
            <person name="Watanabe S."/>
            <person name="Yosida M."/>
            <person name="Hotuta T."/>
            <person name="Kusano J."/>
            <person name="Kanehori K."/>
            <person name="Takahashi-Fujii A."/>
            <person name="Hara H."/>
            <person name="Tanase T.-O."/>
            <person name="Nomura Y."/>
            <person name="Togiya S."/>
            <person name="Komai F."/>
            <person name="Hara R."/>
            <person name="Takeuchi K."/>
            <person name="Arita M."/>
            <person name="Imose N."/>
            <person name="Musashino K."/>
            <person name="Yuuki H."/>
            <person name="Oshima A."/>
            <person name="Sasaki N."/>
            <person name="Aotsuka S."/>
            <person name="Yoshikawa Y."/>
            <person name="Matsunawa H."/>
            <person name="Ichihara T."/>
            <person name="Shiohata N."/>
            <person name="Sano S."/>
            <person name="Moriya S."/>
            <person name="Momiyama H."/>
            <person name="Satoh N."/>
            <person name="Takami S."/>
            <person name="Terashima Y."/>
            <person name="Suzuki O."/>
            <person name="Nakagawa S."/>
            <person name="Senoh A."/>
            <person name="Mizoguchi H."/>
            <person name="Goto Y."/>
            <person name="Shimizu F."/>
            <person name="Wakebe H."/>
            <person name="Hishigaki H."/>
            <person name="Watanabe T."/>
            <person name="Sugiyama A."/>
            <person name="Takemoto M."/>
            <person name="Kawakami B."/>
            <person name="Yamazaki M."/>
            <person name="Watanabe K."/>
            <person name="Kumagai A."/>
            <person name="Itakura S."/>
            <person name="Fukuzumi Y."/>
            <person name="Fujimori Y."/>
            <person name="Komiyama M."/>
            <person name="Tashiro H."/>
            <person name="Tanigami A."/>
            <person name="Fujiwara T."/>
            <person name="Ono T."/>
            <person name="Yamada K."/>
            <person name="Fujii Y."/>
            <person name="Ozaki K."/>
            <person name="Hirao M."/>
            <person name="Ohmori Y."/>
            <person name="Kawabata A."/>
            <person name="Hikiji T."/>
            <person name="Kobatake N."/>
            <person name="Inagaki H."/>
            <person name="Ikema Y."/>
            <person name="Okamoto S."/>
            <person name="Okitani R."/>
            <person name="Kawakami T."/>
            <person name="Noguchi S."/>
            <person name="Itoh T."/>
            <person name="Shigeta K."/>
            <person name="Senba T."/>
            <person name="Matsumura K."/>
            <person name="Nakajima Y."/>
            <person name="Mizuno T."/>
            <person name="Morinaga M."/>
            <person name="Sasaki M."/>
            <person name="Togashi T."/>
            <person name="Oyama M."/>
            <person name="Hata H."/>
            <person name="Watanabe M."/>
            <person name="Komatsu T."/>
            <person name="Mizushima-Sugano J."/>
            <person name="Satoh T."/>
            <person name="Shirai Y."/>
            <person name="Takahashi Y."/>
            <person name="Nakagawa K."/>
            <person name="Okumura K."/>
            <person name="Nagase T."/>
            <person name="Nomura N."/>
            <person name="Kikuchi H."/>
            <person name="Masuho Y."/>
            <person name="Yamashita R."/>
            <person name="Nakai K."/>
            <person name="Yada T."/>
            <person name="Nakamura Y."/>
            <person name="Ohara O."/>
            <person name="Isogai T."/>
            <person name="Sugano S."/>
        </authorList>
    </citation>
    <scope>NUCLEOTIDE SEQUENCE [LARGE SCALE MRNA] (ISOFORM 1)</scope>
    <source>
        <tissue>Cerebellum</tissue>
    </source>
</reference>
<reference key="15">
    <citation type="journal article" date="2006" name="Nature">
        <title>Human chromosome 11 DNA sequence and analysis including novel gene identification.</title>
        <authorList>
            <person name="Taylor T.D."/>
            <person name="Noguchi H."/>
            <person name="Totoki Y."/>
            <person name="Toyoda A."/>
            <person name="Kuroki Y."/>
            <person name="Dewar K."/>
            <person name="Lloyd C."/>
            <person name="Itoh T."/>
            <person name="Takeda T."/>
            <person name="Kim D.-W."/>
            <person name="She X."/>
            <person name="Barlow K.F."/>
            <person name="Bloom T."/>
            <person name="Bruford E."/>
            <person name="Chang J.L."/>
            <person name="Cuomo C.A."/>
            <person name="Eichler E."/>
            <person name="FitzGerald M.G."/>
            <person name="Jaffe D.B."/>
            <person name="LaButti K."/>
            <person name="Nicol R."/>
            <person name="Park H.-S."/>
            <person name="Seaman C."/>
            <person name="Sougnez C."/>
            <person name="Yang X."/>
            <person name="Zimmer A.R."/>
            <person name="Zody M.C."/>
            <person name="Birren B.W."/>
            <person name="Nusbaum C."/>
            <person name="Fujiyama A."/>
            <person name="Hattori M."/>
            <person name="Rogers J."/>
            <person name="Lander E.S."/>
            <person name="Sakaki Y."/>
        </authorList>
    </citation>
    <scope>NUCLEOTIDE SEQUENCE [LARGE SCALE GENOMIC DNA]</scope>
</reference>
<reference key="16">
    <citation type="submission" date="2005-07" db="EMBL/GenBank/DDBJ databases">
        <authorList>
            <person name="Mural R.J."/>
            <person name="Istrail S."/>
            <person name="Sutton G.G."/>
            <person name="Florea L."/>
            <person name="Halpern A.L."/>
            <person name="Mobarry C.M."/>
            <person name="Lippert R."/>
            <person name="Walenz B."/>
            <person name="Shatkay H."/>
            <person name="Dew I."/>
            <person name="Miller J.R."/>
            <person name="Flanigan M.J."/>
            <person name="Edwards N.J."/>
            <person name="Bolanos R."/>
            <person name="Fasulo D."/>
            <person name="Halldorsson B.V."/>
            <person name="Hannenhalli S."/>
            <person name="Turner R."/>
            <person name="Yooseph S."/>
            <person name="Lu F."/>
            <person name="Nusskern D.R."/>
            <person name="Shue B.C."/>
            <person name="Zheng X.H."/>
            <person name="Zhong F."/>
            <person name="Delcher A.L."/>
            <person name="Huson D.H."/>
            <person name="Kravitz S.A."/>
            <person name="Mouchard L."/>
            <person name="Reinert K."/>
            <person name="Remington K.A."/>
            <person name="Clark A.G."/>
            <person name="Waterman M.S."/>
            <person name="Eichler E.E."/>
            <person name="Adams M.D."/>
            <person name="Hunkapiller M.W."/>
            <person name="Myers E.W."/>
            <person name="Venter J.C."/>
        </authorList>
    </citation>
    <scope>NUCLEOTIDE SEQUENCE [LARGE SCALE GENOMIC DNA]</scope>
</reference>
<reference key="17">
    <citation type="journal article" date="2004" name="Genome Res.">
        <title>The status, quality, and expansion of the NIH full-length cDNA project: the Mammalian Gene Collection (MGC).</title>
        <authorList>
            <consortium name="The MGC Project Team"/>
        </authorList>
    </citation>
    <scope>NUCLEOTIDE SEQUENCE [LARGE SCALE MRNA] (ISOFORM 1)</scope>
    <source>
        <tissue>Muscle</tissue>
    </source>
</reference>
<reference key="18">
    <citation type="journal article" date="1988" name="Biochim. Biophys. Acta">
        <title>Differential expression of the human insulin-like growth factor II gene. Characterization of the IGF-II mRNAs and an mRNA encoding a putative IGF-II-associated protein.</title>
        <authorList>
            <person name="de Pagter-Holthuizen P."/>
            <person name="van der Kammen R.A."/>
            <person name="Jansen M."/>
            <person name="van Schaik F.M.A."/>
            <person name="Sussenbach J.S."/>
        </authorList>
    </citation>
    <scope>NUCLEOTIDE SEQUENCE [GENOMIC DNA] OF 103-180</scope>
</reference>
<reference key="19">
    <citation type="journal article" date="1987" name="FEBS Lett.">
        <title>A new 5'-non-coding region for human placental insulin-like growth factor II mRNA expression.</title>
        <authorList>
            <person name="le Bouc Y."/>
            <person name="Noguiez P."/>
            <person name="Sondermeijer P."/>
            <person name="Dreyer D."/>
            <person name="Girard F."/>
            <person name="Binoux M."/>
        </authorList>
    </citation>
    <scope>NUCLEOTIDE SEQUENCE [MRNA] OF 1-161 (ISOFORM 2)</scope>
</reference>
<reference key="20">
    <citation type="journal article" date="1987" name="DNA">
        <title>Tissue-specific and developmentally regulated transcription of the insulin-like growth factor 2 gene.</title>
        <authorList>
            <person name="Gray A."/>
            <person name="Tam A.W."/>
            <person name="Dull T.J."/>
            <person name="Hayflick J.S."/>
            <person name="Pintar J."/>
            <person name="Cavenee W.K."/>
            <person name="Koufos A."/>
            <person name="Ullrich A."/>
        </authorList>
    </citation>
    <scope>NUCLEOTIDE SEQUENCE [GENOMIC DNA] OF 1-52</scope>
    <source>
        <tissue>Liver</tissue>
    </source>
</reference>
<reference key="21">
    <citation type="journal article" date="1978" name="FEBS Lett.">
        <title>Primary structure of human insulin-like growth factor II.</title>
        <authorList>
            <person name="Rinderknecht E."/>
            <person name="Humbel R.E."/>
        </authorList>
    </citation>
    <scope>PROTEIN SEQUENCE OF 25-91</scope>
</reference>
<reference key="22">
    <citation type="journal article" date="1989" name="J. Biol. Chem.">
        <title>Structure and activity dependence of recombinant human insulin-like growth factor II on disulfide bond pairing.</title>
        <authorList>
            <person name="Smith M.C."/>
            <person name="Cook J.A."/>
            <person name="Furman T.C."/>
            <person name="Occolowitz J.L."/>
        </authorList>
    </citation>
    <scope>PARTIAL PROTEIN SEQUENCE</scope>
    <scope>DISULFIDE BONDS</scope>
</reference>
<reference key="23">
    <citation type="journal article" date="1995" name="J. Chromatogr. B">
        <title>Purification and characterization of insulin-like growth factor II (IGF II) and an IGF II variant from human placenta.</title>
        <authorList>
            <person name="De Ceuninck F."/>
            <person name="Willeput J."/>
            <person name="Corvol M."/>
        </authorList>
    </citation>
    <scope>PROTEIN SEQUENCE OF 25-68</scope>
</reference>
<reference key="24">
    <citation type="journal article" date="1992" name="J. Biol. Chem.">
        <title>The identification of O-glycosylated precursors of insulin-like growth factor II.</title>
        <authorList>
            <person name="Hudgins W.R."/>
            <person name="Hampton B."/>
            <person name="Burgess W.H."/>
            <person name="Perdue J.F."/>
        </authorList>
    </citation>
    <scope>GLYCOSYLATION AT THR-99</scope>
</reference>
<reference key="25">
    <citation type="journal article" date="2001" name="Hum. Mol. Genet.">
        <title>Positive associations between single nucleotide polymorphisms in the IGF2 gene region and body mass index in adult males.</title>
        <authorList>
            <person name="Gaunt T.R."/>
            <person name="Cooper J.A."/>
            <person name="Miller G.J."/>
            <person name="Day I.N.M."/>
            <person name="O'Dell S.D."/>
        </authorList>
    </citation>
    <scope>POLYMORPHISM</scope>
    <scope>ASSOCIATION WITH BODY MASS INDEX</scope>
</reference>
<reference key="26">
    <citation type="journal article" date="2003" name="FEBS Lett.">
        <title>Detection of bound and free IGF-1 and IGF-2 in human plasma via biomolecular interaction analysis mass spectrometry.</title>
        <authorList>
            <person name="Nedelkov D."/>
            <person name="Nelson R.W."/>
            <person name="Kiernan U.A."/>
            <person name="Niederkofler E.E."/>
            <person name="Tubbs K.A."/>
        </authorList>
    </citation>
    <scope>MASS SPECTROMETRY</scope>
    <scope>PROTEOLYTIC PROCESSING</scope>
</reference>
<reference key="27">
    <citation type="journal article" date="2004" name="J. Proteome Res.">
        <title>Quantitative mass spectrometric immunoassay of insulin like growth factor 1.</title>
        <authorList>
            <person name="Nelson R.W."/>
            <person name="Nedelkov D."/>
            <person name="Tubbs K.A."/>
            <person name="Kiernan U.A."/>
        </authorList>
    </citation>
    <scope>MASS SPECTROMETRY</scope>
    <scope>PROTEOLYTIC PROCESSING</scope>
</reference>
<reference key="28">
    <citation type="journal article" date="2005" name="Proc. Natl. Acad. Sci. U.S.A.">
        <title>Role of pro-IGF-II processing by proprotein convertase 4 in human placental development.</title>
        <authorList>
            <person name="Qiu Q."/>
            <person name="Basak A."/>
            <person name="Mbikay M."/>
            <person name="Tsang B.K."/>
            <person name="Gruslin A."/>
        </authorList>
    </citation>
    <scope>PROTEOLYTIC CLEAVAGE</scope>
    <scope>SUBCELLULAR LOCATION</scope>
    <scope>TISSUE SPECIFICITY</scope>
    <scope>MUTAGENESIS OF ARG-92; LYS-112 AND ARG-128</scope>
    <scope>GLYCOSYLATION</scope>
</reference>
<reference key="29">
    <citation type="journal article" date="2007" name="Am. J. Physiol.">
        <title>Preptin, another peptide product of the pancreatic beta-cell, is osteogenic in vitro and in vivo.</title>
        <authorList>
            <person name="Cornish J."/>
            <person name="Callon K.E."/>
            <person name="Bava U."/>
            <person name="Watson M."/>
            <person name="Xu X."/>
            <person name="Lin J.M."/>
            <person name="Chan V.A."/>
            <person name="Grey A.B."/>
            <person name="Naot D."/>
            <person name="Buchanan C.M."/>
            <person name="Cooper G.J."/>
            <person name="Reid I.R."/>
        </authorList>
    </citation>
    <scope>OSTEOGENIC FUNCTION OF PREPTIN</scope>
</reference>
<reference key="30">
    <citation type="journal article" date="2008" name="Glia">
        <title>Matrix metalloproteinase-9 interplays with the IGFBP2-IGFII complex to promote cell growth and motility in astrocytomas.</title>
        <authorList>
            <person name="Rorive S."/>
            <person name="Berton A."/>
            <person name="D'haene N."/>
            <person name="Takacs C.N."/>
            <person name="Debeir O."/>
            <person name="Decaestecker C."/>
            <person name="Salmon I."/>
        </authorList>
    </citation>
    <scope>FUNCTION</scope>
    <scope>INTERACTION WITH IGFBP2</scope>
</reference>
<reference key="31">
    <citation type="journal article" date="2009" name="J. Med. Genet.">
        <title>Epigenetic mutations of the imprinted IGF2-H19 domain in Silver-Russell syndrome (SRS): results from a large cohort of patients with SRS and SRS-like phenotypes.</title>
        <authorList>
            <person name="Bartholdi D."/>
            <person name="Krajewska-Walasek M."/>
            <person name="Ounap K."/>
            <person name="Gaspar H."/>
            <person name="Chrzanowska K.H."/>
            <person name="Ilyana H."/>
            <person name="Kayserili H."/>
            <person name="Lurie I.W."/>
            <person name="Schinzel A."/>
            <person name="Baumer A."/>
        </authorList>
    </citation>
    <scope>INVOLVEMENT IN SRS1</scope>
</reference>
<reference key="32">
    <citation type="journal article" date="2009" name="Nat. Methods">
        <title>Enrichment of glycopeptides for glycan structure and attachment site identification.</title>
        <authorList>
            <person name="Nilsson J."/>
            <person name="Rueetschi U."/>
            <person name="Halim A."/>
            <person name="Hesse C."/>
            <person name="Carlsohn E."/>
            <person name="Brinkmalm G."/>
            <person name="Larson G."/>
        </authorList>
    </citation>
    <scope>GLYCOSYLATION [LARGE SCALE ANALYSIS] AT THR-163</scope>
    <scope>STRUCTURE OF CARBOHYDRATES</scope>
    <source>
        <tissue>Cerebrospinal fluid</tissue>
    </source>
</reference>
<reference key="33">
    <citation type="journal article" date="2012" name="Mol. Cell. Proteomics">
        <title>Human urinary glycoproteomics; attachment site specific analysis of N- and O-linked glycosylations by CID and ECD.</title>
        <authorList>
            <person name="Halim A."/>
            <person name="Nilsson J."/>
            <person name="Ruetschi U."/>
            <person name="Hesse C."/>
            <person name="Larson G."/>
        </authorList>
    </citation>
    <scope>GLYCOSYLATION AT THR-96; THR-99 AND THR-163</scope>
    <scope>STRUCTURE OF CARBOHYDRATES</scope>
    <scope>IDENTIFICATION BY MASS SPECTROMETRY</scope>
</reference>
<reference key="34">
    <citation type="journal article" date="2013" name="J. Proteome Res.">
        <title>LC-MS/MS characterization of O-glycosylation sites and glycan structures of human cerebrospinal fluid glycoproteins.</title>
        <authorList>
            <person name="Halim A."/>
            <person name="Ruetschi U."/>
            <person name="Larson G."/>
            <person name="Nilsson J."/>
        </authorList>
    </citation>
    <scope>GLYCOSYLATION AT THR-96</scope>
    <scope>IDENTIFICATION BY MASS SPECTROMETRY</scope>
</reference>
<reference key="35">
    <citation type="journal article" date="2014" name="Clin. Endocrinol. (Oxf.)">
        <title>Insulin-like growth factor-II: its role in metabolic and endocrine disease.</title>
        <authorList>
            <person name="Livingstone C."/>
            <person name="Borai A."/>
        </authorList>
    </citation>
    <scope>REVIEW OF FUNCTION</scope>
</reference>
<reference key="36">
    <citation type="journal article" date="2015" name="N. Engl. J. Med.">
        <title>Paternally inherited IGF2 mutation and growth restriction.</title>
        <authorList>
            <person name="Begemann M."/>
            <person name="Zirn B."/>
            <person name="Santen G."/>
            <person name="Wirthgen E."/>
            <person name="Soellner L."/>
            <person name="Buettel H.M."/>
            <person name="Schweizer R."/>
            <person name="van Workum W."/>
            <person name="Binder G."/>
            <person name="Eggermann T."/>
        </authorList>
    </citation>
    <scope>INVOLVEMENT IN SRS3</scope>
</reference>
<reference key="37">
    <citation type="journal article" date="2017" name="PLoS ONE">
        <title>Direct integrin binding to insulin-like growth factor-2 through the C-domain is required for insulin-like growth factor receptor type 1 (IGF1R) signaling.</title>
        <authorList>
            <person name="Cedano Prieto D.M."/>
            <person name="Cheng Y."/>
            <person name="Chang C.C."/>
            <person name="Yu J."/>
            <person name="Takada Y.K."/>
            <person name="Takada Y."/>
        </authorList>
    </citation>
    <scope>FUNCTION</scope>
    <scope>INTERACTION WITH INTEGRINS ITGAV:ITGB3 AND ITGA6:ITGB4</scope>
    <scope>SITES IMPORTANT FOR INTEGRIN BINDING</scope>
    <scope>MUTAGENESIS OF ARG-48; ARG-58; ARG-61; ARG-62 AND ARG-64</scope>
</reference>
<reference key="38">
    <citation type="journal article" date="1983" name="Fed. Proc.">
        <title>Tertiary structures, receptor binding, and antigenicity of insulinlike growth factors.</title>
        <authorList>
            <person name="Blundell T.L."/>
            <person name="Bedarkar S."/>
            <person name="Humbel R.E."/>
        </authorList>
    </citation>
    <scope>3D-STRUCTURE MODELING</scope>
</reference>
<reference key="39">
    <citation type="journal article" date="1994" name="EMBO J.">
        <title>Solution structure of human insulin-like growth factor II; recognition sites for receptors and binding proteins.</title>
        <authorList>
            <person name="Terasawa H."/>
            <person name="Kohda D."/>
            <person name="Hatanaka H."/>
            <person name="Nagata K."/>
            <person name="Higashihashi N."/>
            <person name="Fujiwara H."/>
            <person name="Sakano K."/>
            <person name="Inagaki F."/>
        </authorList>
    </citation>
    <scope>STRUCTURE BY NMR</scope>
</reference>
<reference key="40">
    <citation type="journal article" date="2008" name="EMBO J.">
        <title>Structure and functional analysis of the IGF-II/IGF2R interaction.</title>
        <authorList>
            <person name="Brown J."/>
            <person name="Delaine C."/>
            <person name="Zaccheo O.J."/>
            <person name="Siebold C."/>
            <person name="Gilbert R.J."/>
            <person name="van Boxel G."/>
            <person name="Denley A."/>
            <person name="Wallace J.C."/>
            <person name="Hassan A.B."/>
            <person name="Forbes B.E."/>
            <person name="Jones E.Y."/>
        </authorList>
    </citation>
    <scope>X-RAY CRYSTALLOGRAPHY (4.1 ANGSTROMS) OF 25-91 IN COMPLEX WITH IGF2R</scope>
    <scope>DISULFIDE BONDS</scope>
</reference>
<reference key="41">
    <citation type="journal article" date="2018" name="Genet. Med.">
        <title>Genetic disruption of the oncogenic HMGA2-PLAG1-IGF2 pathway causes fetal growth restriction.</title>
        <authorList>
            <person name="Abi Habib W."/>
            <person name="Brioude F."/>
            <person name="Edouard T."/>
            <person name="Bennett J.T."/>
            <person name="Lienhardt-Roussie A."/>
            <person name="Tixier F."/>
            <person name="Salem J."/>
            <person name="Yuen T."/>
            <person name="Azzi S."/>
            <person name="Le Bouc Y."/>
            <person name="Harbison M.D."/>
            <person name="Netchine I."/>
        </authorList>
    </citation>
    <scope>VARIANT SRS3 26-TYR--LYS-180 DEL</scope>
</reference>
<organism>
    <name type="scientific">Homo sapiens</name>
    <name type="common">Human</name>
    <dbReference type="NCBI Taxonomy" id="9606"/>
    <lineage>
        <taxon>Eukaryota</taxon>
        <taxon>Metazoa</taxon>
        <taxon>Chordata</taxon>
        <taxon>Craniata</taxon>
        <taxon>Vertebrata</taxon>
        <taxon>Euteleostomi</taxon>
        <taxon>Mammalia</taxon>
        <taxon>Eutheria</taxon>
        <taxon>Euarchontoglires</taxon>
        <taxon>Primates</taxon>
        <taxon>Haplorrhini</taxon>
        <taxon>Catarrhini</taxon>
        <taxon>Hominidae</taxon>
        <taxon>Homo</taxon>
    </lineage>
</organism>
<dbReference type="EMBL" id="X03562">
    <property type="protein sequence ID" value="CAA27249.1"/>
    <property type="molecule type" value="Genomic_DNA"/>
</dbReference>
<dbReference type="EMBL" id="X00910">
    <property type="protein sequence ID" value="CAA25426.1"/>
    <property type="molecule type" value="mRNA"/>
</dbReference>
<dbReference type="EMBL" id="J03242">
    <property type="protein sequence ID" value="AAA52545.1"/>
    <property type="molecule type" value="mRNA"/>
</dbReference>
<dbReference type="EMBL" id="X03425">
    <property type="protein sequence ID" value="CAA27155.1"/>
    <property type="molecule type" value="Genomic_DNA"/>
</dbReference>
<dbReference type="EMBL" id="X03426">
    <property type="protein sequence ID" value="CAA27156.1"/>
    <property type="molecule type" value="Genomic_DNA"/>
</dbReference>
<dbReference type="EMBL" id="X03427">
    <property type="protein sequence ID" value="CAA27157.1"/>
    <property type="molecule type" value="Genomic_DNA"/>
</dbReference>
<dbReference type="EMBL" id="M17426">
    <property type="protein sequence ID" value="AAA60088.1"/>
    <property type="molecule type" value="mRNA"/>
</dbReference>
<dbReference type="EMBL" id="M29645">
    <property type="protein sequence ID" value="AAA52544.1"/>
    <property type="molecule type" value="mRNA"/>
</dbReference>
<dbReference type="EMBL" id="M17863">
    <property type="protein sequence ID" value="AAA52443.1"/>
    <property type="status" value="ALT_SEQ"/>
    <property type="molecule type" value="mRNA"/>
</dbReference>
<dbReference type="EMBL" id="S77035">
    <property type="protein sequence ID" value="AAB34155.1"/>
    <property type="molecule type" value="mRNA"/>
</dbReference>
<dbReference type="EMBL" id="DQ104203">
    <property type="protein sequence ID" value="ABD93451.1"/>
    <property type="molecule type" value="mRNA"/>
</dbReference>
<dbReference type="EMBL" id="HM481219">
    <property type="protein sequence ID" value="ADO21454.1"/>
    <property type="molecule type" value="mRNA"/>
</dbReference>
<dbReference type="EMBL" id="AF217977">
    <property type="protein sequence ID" value="AAG17220.1"/>
    <property type="molecule type" value="mRNA"/>
</dbReference>
<dbReference type="EMBL" id="BT007013">
    <property type="protein sequence ID" value="AAP35659.1"/>
    <property type="molecule type" value="mRNA"/>
</dbReference>
<dbReference type="EMBL" id="AF517226">
    <property type="protein sequence ID" value="AAM51825.1"/>
    <property type="molecule type" value="Genomic_DNA"/>
</dbReference>
<dbReference type="EMBL" id="AC132217">
    <property type="status" value="NOT_ANNOTATED_CDS"/>
    <property type="molecule type" value="Genomic_DNA"/>
</dbReference>
<dbReference type="EMBL" id="AK126688">
    <property type="protein sequence ID" value="BAG54360.1"/>
    <property type="molecule type" value="mRNA"/>
</dbReference>
<dbReference type="EMBL" id="CH471158">
    <property type="protein sequence ID" value="EAX02485.1"/>
    <property type="molecule type" value="Genomic_DNA"/>
</dbReference>
<dbReference type="EMBL" id="BC000531">
    <property type="protein sequence ID" value="AAH00531.1"/>
    <property type="molecule type" value="mRNA"/>
</dbReference>
<dbReference type="EMBL" id="X07868">
    <property type="protein sequence ID" value="CAA30717.1"/>
    <property type="molecule type" value="Genomic_DNA"/>
</dbReference>
<dbReference type="EMBL" id="X06159">
    <property type="protein sequence ID" value="CAA29516.1"/>
    <property type="molecule type" value="mRNA"/>
</dbReference>
<dbReference type="EMBL" id="X06160">
    <property type="protein sequence ID" value="CAA29517.1"/>
    <property type="molecule type" value="Transcribed_RNA"/>
</dbReference>
<dbReference type="EMBL" id="X06161">
    <property type="protein sequence ID" value="CAA29518.1"/>
    <property type="molecule type" value="mRNA"/>
</dbReference>
<dbReference type="EMBL" id="M22373">
    <property type="protein sequence ID" value="AAA52536.1"/>
    <property type="molecule type" value="Genomic_DNA"/>
</dbReference>
<dbReference type="CCDS" id="CCDS44517.1">
    <molecule id="P01344-3"/>
</dbReference>
<dbReference type="CCDS" id="CCDS7728.1">
    <molecule id="P01344-1"/>
</dbReference>
<dbReference type="PIR" id="B23614">
    <property type="entry name" value="IGHU2"/>
</dbReference>
<dbReference type="PIR" id="I67610">
    <property type="entry name" value="I67610"/>
</dbReference>
<dbReference type="PIR" id="S02423">
    <property type="entry name" value="S02423"/>
</dbReference>
<dbReference type="RefSeq" id="NP_000603.1">
    <molecule id="P01344-1"/>
    <property type="nucleotide sequence ID" value="NM_000612.6"/>
</dbReference>
<dbReference type="RefSeq" id="NP_001007140.2">
    <molecule id="P01344-1"/>
    <property type="nucleotide sequence ID" value="NM_001007139.6"/>
</dbReference>
<dbReference type="RefSeq" id="NP_001121070.1">
    <molecule id="P01344-3"/>
    <property type="nucleotide sequence ID" value="NM_001127598.3"/>
</dbReference>
<dbReference type="RefSeq" id="NP_001278790.1">
    <molecule id="P01344-1"/>
    <property type="nucleotide sequence ID" value="NM_001291861.3"/>
</dbReference>
<dbReference type="RefSeq" id="NP_001278791.1">
    <molecule id="P01344-1"/>
    <property type="nucleotide sequence ID" value="NM_001291862.3"/>
</dbReference>
<dbReference type="PDB" id="1IGL">
    <property type="method" value="NMR"/>
    <property type="chains" value="A=25-91"/>
</dbReference>
<dbReference type="PDB" id="2L29">
    <property type="method" value="NMR"/>
    <property type="chains" value="B=25-91"/>
</dbReference>
<dbReference type="PDB" id="2V5P">
    <property type="method" value="X-ray"/>
    <property type="resolution" value="4.10 A"/>
    <property type="chains" value="C/D=25-91"/>
</dbReference>
<dbReference type="PDB" id="3E4Z">
    <property type="method" value="X-ray"/>
    <property type="resolution" value="2.28 A"/>
    <property type="chains" value="C/D=25-91"/>
</dbReference>
<dbReference type="PDB" id="3KR3">
    <property type="method" value="X-ray"/>
    <property type="resolution" value="2.20 A"/>
    <property type="chains" value="D=25-91"/>
</dbReference>
<dbReference type="PDB" id="5L3L">
    <property type="method" value="NMR"/>
    <property type="chains" value="A=25-91"/>
</dbReference>
<dbReference type="PDB" id="5L3M">
    <property type="method" value="NMR"/>
    <property type="chains" value="A=25-91"/>
</dbReference>
<dbReference type="PDB" id="5L3N">
    <property type="method" value="NMR"/>
    <property type="chains" value="A=25-91"/>
</dbReference>
<dbReference type="PDB" id="6UM2">
    <property type="method" value="EM"/>
    <property type="resolution" value="4.32 A"/>
    <property type="chains" value="B=25-91"/>
</dbReference>
<dbReference type="PDB" id="6VWG">
    <property type="method" value="EM"/>
    <property type="resolution" value="3.21 A"/>
    <property type="chains" value="I=25-91"/>
</dbReference>
<dbReference type="PDB" id="6VWI">
    <property type="method" value="EM"/>
    <property type="resolution" value="3.70 A"/>
    <property type="chains" value="I=25-91"/>
</dbReference>
<dbReference type="PDB" id="8U4C">
    <property type="method" value="EM"/>
    <property type="resolution" value="3.60 A"/>
    <property type="chains" value="C/D/E/F=1-180"/>
</dbReference>
<dbReference type="PDB" id="8U4E">
    <property type="method" value="EM"/>
    <property type="resolution" value="4.20 A"/>
    <property type="chains" value="C/D/E=1-180"/>
</dbReference>
<dbReference type="PDB" id="8VJB">
    <property type="method" value="EM"/>
    <property type="resolution" value="3.60 A"/>
    <property type="chains" value="C/D/E/F=1-180"/>
</dbReference>
<dbReference type="PDB" id="8VJC">
    <property type="method" value="EM"/>
    <property type="resolution" value="3.80 A"/>
    <property type="chains" value="C/D/E=1-180"/>
</dbReference>
<dbReference type="PDBsum" id="1IGL"/>
<dbReference type="PDBsum" id="2L29"/>
<dbReference type="PDBsum" id="2V5P"/>
<dbReference type="PDBsum" id="3E4Z"/>
<dbReference type="PDBsum" id="3KR3"/>
<dbReference type="PDBsum" id="5L3L"/>
<dbReference type="PDBsum" id="5L3M"/>
<dbReference type="PDBsum" id="5L3N"/>
<dbReference type="PDBsum" id="6UM2"/>
<dbReference type="PDBsum" id="6VWG"/>
<dbReference type="PDBsum" id="6VWI"/>
<dbReference type="PDBsum" id="8U4C"/>
<dbReference type="PDBsum" id="8U4E"/>
<dbReference type="PDBsum" id="8VJB"/>
<dbReference type="PDBsum" id="8VJC"/>
<dbReference type="BMRB" id="P01344"/>
<dbReference type="EMDB" id="EMD-20816"/>
<dbReference type="EMDB" id="EMD-21415"/>
<dbReference type="EMDB" id="EMD-21417"/>
<dbReference type="EMDB" id="EMD-41878"/>
<dbReference type="EMDB" id="EMD-41880"/>
<dbReference type="EMDB" id="EMD-43279"/>
<dbReference type="EMDB" id="EMD-43280"/>
<dbReference type="SMR" id="P01344"/>
<dbReference type="BioGRID" id="109702">
    <property type="interactions" value="37"/>
</dbReference>
<dbReference type="CORUM" id="P01344"/>
<dbReference type="DIP" id="DIP-29508N"/>
<dbReference type="FunCoup" id="P01344">
    <property type="interactions" value="721"/>
</dbReference>
<dbReference type="IntAct" id="P01344">
    <property type="interactions" value="27"/>
</dbReference>
<dbReference type="MINT" id="P01344"/>
<dbReference type="STRING" id="9606.ENSP00000391826"/>
<dbReference type="ChEMBL" id="CHEMBL3712957"/>
<dbReference type="GlyConnect" id="760">
    <property type="glycosylation" value="9 O-Linked glycans (4 sites)"/>
</dbReference>
<dbReference type="GlyCosmos" id="P01344">
    <property type="glycosylation" value="4 sites, 9 glycans"/>
</dbReference>
<dbReference type="GlyGen" id="P01344">
    <property type="glycosylation" value="8 sites, 11 O-linked glycans (7 sites)"/>
</dbReference>
<dbReference type="iPTMnet" id="P01344"/>
<dbReference type="PhosphoSitePlus" id="P01344"/>
<dbReference type="BioMuta" id="IGF2"/>
<dbReference type="DMDM" id="124255"/>
<dbReference type="jPOST" id="P01344"/>
<dbReference type="MassIVE" id="P01344"/>
<dbReference type="PaxDb" id="9606-ENSP00000391826"/>
<dbReference type="PeptideAtlas" id="P01344"/>
<dbReference type="ProteomicsDB" id="51375">
    <molecule id="P01344-1"/>
</dbReference>
<dbReference type="ProteomicsDB" id="51376">
    <molecule id="P01344-2"/>
</dbReference>
<dbReference type="ProteomicsDB" id="9318"/>
<dbReference type="Pumba" id="P01344"/>
<dbReference type="ABCD" id="P01344">
    <property type="antibodies" value="9 sequenced antibodies"/>
</dbReference>
<dbReference type="Antibodypedia" id="1027">
    <property type="antibodies" value="635 antibodies from 40 providers"/>
</dbReference>
<dbReference type="DNASU" id="3481"/>
<dbReference type="Ensembl" id="ENST00000381389.5">
    <molecule id="P01344-1"/>
    <property type="protein sequence ID" value="ENSP00000370796.1"/>
    <property type="gene ID" value="ENSG00000167244.22"/>
</dbReference>
<dbReference type="Ensembl" id="ENST00000381392.5">
    <molecule id="P01344-2"/>
    <property type="protein sequence ID" value="ENSP00000370799.1"/>
    <property type="gene ID" value="ENSG00000167244.22"/>
</dbReference>
<dbReference type="Ensembl" id="ENST00000381395.5">
    <molecule id="P01344-1"/>
    <property type="protein sequence ID" value="ENSP00000370802.1"/>
    <property type="gene ID" value="ENSG00000167244.22"/>
</dbReference>
<dbReference type="Ensembl" id="ENST00000381406.8">
    <molecule id="P01344-2"/>
    <property type="protein sequence ID" value="ENSP00000370813.4"/>
    <property type="gene ID" value="ENSG00000167244.22"/>
</dbReference>
<dbReference type="Ensembl" id="ENST00000416167.7">
    <molecule id="P01344-1"/>
    <property type="protein sequence ID" value="ENSP00000414497.2"/>
    <property type="gene ID" value="ENSG00000167244.22"/>
</dbReference>
<dbReference type="Ensembl" id="ENST00000418738.2">
    <molecule id="P01344-1"/>
    <property type="protein sequence ID" value="ENSP00000402047.2"/>
    <property type="gene ID" value="ENSG00000167244.22"/>
</dbReference>
<dbReference type="Ensembl" id="ENST00000434045.6">
    <molecule id="P01344-3"/>
    <property type="protein sequence ID" value="ENSP00000391826.2"/>
    <property type="gene ID" value="ENSG00000167244.22"/>
</dbReference>
<dbReference type="Ensembl" id="ENST00000481781.3">
    <molecule id="P01344-1"/>
    <property type="protein sequence ID" value="ENSP00000511998.1"/>
    <property type="gene ID" value="ENSG00000167244.22"/>
</dbReference>
<dbReference type="Ensembl" id="ENST00000695541.1">
    <molecule id="P01344-1"/>
    <property type="protein sequence ID" value="ENSP00000511997.1"/>
    <property type="gene ID" value="ENSG00000167244.22"/>
</dbReference>
<dbReference type="GeneID" id="3481"/>
<dbReference type="KEGG" id="hsa:3481"/>
<dbReference type="MANE-Select" id="ENST00000416167.7">
    <property type="protein sequence ID" value="ENSP00000414497.2"/>
    <property type="RefSeq nucleotide sequence ID" value="NM_000612.6"/>
    <property type="RefSeq protein sequence ID" value="NP_000603.1"/>
</dbReference>
<dbReference type="UCSC" id="uc001lvf.4">
    <molecule id="P01344-1"/>
    <property type="organism name" value="human"/>
</dbReference>
<dbReference type="AGR" id="HGNC:5466"/>
<dbReference type="CTD" id="3481"/>
<dbReference type="DisGeNET" id="3481"/>
<dbReference type="GeneCards" id="IGF2"/>
<dbReference type="GeneReviews" id="IGF2"/>
<dbReference type="HGNC" id="HGNC:5466">
    <property type="gene designation" value="IGF2"/>
</dbReference>
<dbReference type="HPA" id="ENSG00000167244">
    <property type="expression patterns" value="Tissue enriched (placenta)"/>
</dbReference>
<dbReference type="MalaCards" id="IGF2"/>
<dbReference type="MIM" id="147470">
    <property type="type" value="gene"/>
</dbReference>
<dbReference type="MIM" id="180860">
    <property type="type" value="phenotype"/>
</dbReference>
<dbReference type="MIM" id="616489">
    <property type="type" value="phenotype"/>
</dbReference>
<dbReference type="neXtProt" id="NX_P01344"/>
<dbReference type="OpenTargets" id="ENSG00000167244"/>
<dbReference type="Orphanet" id="231117">
    <property type="disease" value="Beckwith-Wiedemann syndrome due to imprinting defect of 11p15"/>
</dbReference>
<dbReference type="Orphanet" id="2128">
    <property type="disease" value="Isolated hemihyperplasia"/>
</dbReference>
<dbReference type="Orphanet" id="231144">
    <property type="disease" value="Silver-Russell syndrome due to 11p15 microduplication"/>
</dbReference>
<dbReference type="Orphanet" id="397590">
    <property type="disease" value="Silver-Russell syndrome due to a point mutation"/>
</dbReference>
<dbReference type="Orphanet" id="231140">
    <property type="disease" value="Silver-Russell syndrome due to an imprinting defect of 11p15"/>
</dbReference>
<dbReference type="PharmGKB" id="PA29699"/>
<dbReference type="VEuPathDB" id="HostDB:ENSG00000167244"/>
<dbReference type="eggNOG" id="ENOG502S0I0">
    <property type="taxonomic scope" value="Eukaryota"/>
</dbReference>
<dbReference type="GeneTree" id="ENSGT00940000160745"/>
<dbReference type="HOGENOM" id="CLU_092464_1_0_1"/>
<dbReference type="InParanoid" id="P01344"/>
<dbReference type="OMA" id="KVQRMCA"/>
<dbReference type="OrthoDB" id="9449995at2759"/>
<dbReference type="PAN-GO" id="P01344">
    <property type="GO annotations" value="12 GO annotations based on evolutionary models"/>
</dbReference>
<dbReference type="PhylomeDB" id="P01344"/>
<dbReference type="TreeFam" id="TF332820"/>
<dbReference type="PathwayCommons" id="P01344"/>
<dbReference type="Reactome" id="R-HSA-114608">
    <property type="pathway name" value="Platelet degranulation"/>
</dbReference>
<dbReference type="Reactome" id="R-HSA-2404192">
    <property type="pathway name" value="Signaling by Type 1 Insulin-like Growth Factor 1 Receptor (IGF1R)"/>
</dbReference>
<dbReference type="Reactome" id="R-HSA-2428928">
    <property type="pathway name" value="IRS-related events triggered by IGF1R"/>
</dbReference>
<dbReference type="Reactome" id="R-HSA-2428933">
    <property type="pathway name" value="SHC-related events triggered by IGF1R"/>
</dbReference>
<dbReference type="Reactome" id="R-HSA-381426">
    <property type="pathway name" value="Regulation of Insulin-like Growth Factor (IGF) transport and uptake by Insulin-like Growth Factor Binding Proteins (IGFBPs)"/>
</dbReference>
<dbReference type="SignaLink" id="P01344"/>
<dbReference type="SIGNOR" id="P01344"/>
<dbReference type="BioGRID-ORCS" id="3481">
    <property type="hits" value="10 hits in 1159 CRISPR screens"/>
</dbReference>
<dbReference type="EvolutionaryTrace" id="P01344"/>
<dbReference type="GeneWiki" id="Insulin-like_growth_factor_2"/>
<dbReference type="GenomeRNAi" id="3481"/>
<dbReference type="Pharos" id="P01344">
    <property type="development level" value="Tbio"/>
</dbReference>
<dbReference type="PRO" id="PR:P01344"/>
<dbReference type="Proteomes" id="UP000005640">
    <property type="component" value="Chromosome 11"/>
</dbReference>
<dbReference type="RNAct" id="P01344">
    <property type="molecule type" value="protein"/>
</dbReference>
<dbReference type="Bgee" id="ENSG00000167244">
    <property type="expression patterns" value="Expressed in adrenal tissue and 98 other cell types or tissues"/>
</dbReference>
<dbReference type="GO" id="GO:0005576">
    <property type="term" value="C:extracellular region"/>
    <property type="evidence" value="ECO:0000304"/>
    <property type="project" value="Reactome"/>
</dbReference>
<dbReference type="GO" id="GO:0005615">
    <property type="term" value="C:extracellular space"/>
    <property type="evidence" value="ECO:0000318"/>
    <property type="project" value="GO_Central"/>
</dbReference>
<dbReference type="GO" id="GO:0031093">
    <property type="term" value="C:platelet alpha granule lumen"/>
    <property type="evidence" value="ECO:0000304"/>
    <property type="project" value="Reactome"/>
</dbReference>
<dbReference type="GO" id="GO:0008083">
    <property type="term" value="F:growth factor activity"/>
    <property type="evidence" value="ECO:0000314"/>
    <property type="project" value="BHF-UCL"/>
</dbReference>
<dbReference type="GO" id="GO:0005179">
    <property type="term" value="F:hormone activity"/>
    <property type="evidence" value="ECO:0007669"/>
    <property type="project" value="UniProtKB-KW"/>
</dbReference>
<dbReference type="GO" id="GO:0005158">
    <property type="term" value="F:insulin receptor binding"/>
    <property type="evidence" value="ECO:0000353"/>
    <property type="project" value="BHF-UCL"/>
</dbReference>
<dbReference type="GO" id="GO:0005159">
    <property type="term" value="F:insulin-like growth factor receptor binding"/>
    <property type="evidence" value="ECO:0000315"/>
    <property type="project" value="AgBase"/>
</dbReference>
<dbReference type="GO" id="GO:0005178">
    <property type="term" value="F:integrin binding"/>
    <property type="evidence" value="ECO:0000314"/>
    <property type="project" value="UniProtKB"/>
</dbReference>
<dbReference type="GO" id="GO:0043539">
    <property type="term" value="F:protein serine/threonine kinase activator activity"/>
    <property type="evidence" value="ECO:0000250"/>
    <property type="project" value="BHF-UCL"/>
</dbReference>
<dbReference type="GO" id="GO:0048018">
    <property type="term" value="F:receptor ligand activity"/>
    <property type="evidence" value="ECO:0000250"/>
    <property type="project" value="BHF-UCL"/>
</dbReference>
<dbReference type="GO" id="GO:0030297">
    <property type="term" value="F:transmembrane receptor protein tyrosine kinase activator activity"/>
    <property type="evidence" value="ECO:0000314"/>
    <property type="project" value="UniProt"/>
</dbReference>
<dbReference type="GO" id="GO:0009887">
    <property type="term" value="P:animal organ morphogenesis"/>
    <property type="evidence" value="ECO:0007669"/>
    <property type="project" value="Ensembl"/>
</dbReference>
<dbReference type="GO" id="GO:0001892">
    <property type="term" value="P:embryonic placenta development"/>
    <property type="evidence" value="ECO:0000250"/>
    <property type="project" value="UniProtKB"/>
</dbReference>
<dbReference type="GO" id="GO:0060669">
    <property type="term" value="P:embryonic placenta morphogenesis"/>
    <property type="evidence" value="ECO:0000250"/>
    <property type="project" value="UniProtKB"/>
</dbReference>
<dbReference type="GO" id="GO:0031017">
    <property type="term" value="P:exocrine pancreas development"/>
    <property type="evidence" value="ECO:0007669"/>
    <property type="project" value="Ensembl"/>
</dbReference>
<dbReference type="GO" id="GO:0071514">
    <property type="term" value="P:genomic imprinting"/>
    <property type="evidence" value="ECO:0000304"/>
    <property type="project" value="ProtInc"/>
</dbReference>
<dbReference type="GO" id="GO:0006006">
    <property type="term" value="P:glucose metabolic process"/>
    <property type="evidence" value="ECO:0007669"/>
    <property type="project" value="UniProtKB-KW"/>
</dbReference>
<dbReference type="GO" id="GO:0001701">
    <property type="term" value="P:in utero embryonic development"/>
    <property type="evidence" value="ECO:0000250"/>
    <property type="project" value="UniProtKB"/>
</dbReference>
<dbReference type="GO" id="GO:0008286">
    <property type="term" value="P:insulin receptor signaling pathway"/>
    <property type="evidence" value="ECO:0000250"/>
    <property type="project" value="BHF-UCL"/>
</dbReference>
<dbReference type="GO" id="GO:0048009">
    <property type="term" value="P:insulin-like growth factor receptor signaling pathway"/>
    <property type="evidence" value="ECO:0007669"/>
    <property type="project" value="Ensembl"/>
</dbReference>
<dbReference type="GO" id="GO:0051148">
    <property type="term" value="P:negative regulation of muscle cell differentiation"/>
    <property type="evidence" value="ECO:0000250"/>
    <property type="project" value="UniProtKB"/>
</dbReference>
<dbReference type="GO" id="GO:0000122">
    <property type="term" value="P:negative regulation of transcription by RNA polymerase II"/>
    <property type="evidence" value="ECO:0000250"/>
    <property type="project" value="UniProtKB"/>
</dbReference>
<dbReference type="GO" id="GO:0001649">
    <property type="term" value="P:osteoblast differentiation"/>
    <property type="evidence" value="ECO:0007669"/>
    <property type="project" value="Ensembl"/>
</dbReference>
<dbReference type="GO" id="GO:0042104">
    <property type="term" value="P:positive regulation of activated T cell proliferation"/>
    <property type="evidence" value="ECO:0000314"/>
    <property type="project" value="BHF-UCL"/>
</dbReference>
<dbReference type="GO" id="GO:0051781">
    <property type="term" value="P:positive regulation of cell division"/>
    <property type="evidence" value="ECO:0007669"/>
    <property type="project" value="UniProtKB-KW"/>
</dbReference>
<dbReference type="GO" id="GO:0008284">
    <property type="term" value="P:positive regulation of cell population proliferation"/>
    <property type="evidence" value="ECO:0000314"/>
    <property type="project" value="UniProtKB"/>
</dbReference>
<dbReference type="GO" id="GO:0045725">
    <property type="term" value="P:positive regulation of glycogen biosynthetic process"/>
    <property type="evidence" value="ECO:0000250"/>
    <property type="project" value="BHF-UCL"/>
</dbReference>
<dbReference type="GO" id="GO:0046628">
    <property type="term" value="P:positive regulation of insulin receptor signaling pathway"/>
    <property type="evidence" value="ECO:0000314"/>
    <property type="project" value="BHF-UCL"/>
</dbReference>
<dbReference type="GO" id="GO:0043410">
    <property type="term" value="P:positive regulation of MAPK cascade"/>
    <property type="evidence" value="ECO:0000314"/>
    <property type="project" value="BHF-UCL"/>
</dbReference>
<dbReference type="GO" id="GO:0045840">
    <property type="term" value="P:positive regulation of mitotic nuclear division"/>
    <property type="evidence" value="ECO:0000314"/>
    <property type="project" value="BHF-UCL"/>
</dbReference>
<dbReference type="GO" id="GO:0040018">
    <property type="term" value="P:positive regulation of multicellular organism growth"/>
    <property type="evidence" value="ECO:0007669"/>
    <property type="project" value="Ensembl"/>
</dbReference>
<dbReference type="GO" id="GO:0046622">
    <property type="term" value="P:positive regulation of organ growth"/>
    <property type="evidence" value="ECO:0007669"/>
    <property type="project" value="Ensembl"/>
</dbReference>
<dbReference type="GO" id="GO:0051897">
    <property type="term" value="P:positive regulation of phosphatidylinositol 3-kinase/protein kinase B signal transduction"/>
    <property type="evidence" value="ECO:0000314"/>
    <property type="project" value="BHF-UCL"/>
</dbReference>
<dbReference type="GO" id="GO:0048633">
    <property type="term" value="P:positive regulation of skeletal muscle tissue growth"/>
    <property type="evidence" value="ECO:0007669"/>
    <property type="project" value="Ensembl"/>
</dbReference>
<dbReference type="GO" id="GO:0045944">
    <property type="term" value="P:positive regulation of transcription by RNA polymerase II"/>
    <property type="evidence" value="ECO:0000318"/>
    <property type="project" value="GO_Central"/>
</dbReference>
<dbReference type="GO" id="GO:1905564">
    <property type="term" value="P:positive regulation of vascular endothelial cell proliferation"/>
    <property type="evidence" value="ECO:0000318"/>
    <property type="project" value="GO_Central"/>
</dbReference>
<dbReference type="GO" id="GO:0006355">
    <property type="term" value="P:regulation of DNA-templated transcription"/>
    <property type="evidence" value="ECO:0000303"/>
    <property type="project" value="BHF-UCL"/>
</dbReference>
<dbReference type="GO" id="GO:0051147">
    <property type="term" value="P:regulation of muscle cell differentiation"/>
    <property type="evidence" value="ECO:0000250"/>
    <property type="project" value="UniProtKB"/>
</dbReference>
<dbReference type="GO" id="GO:0051146">
    <property type="term" value="P:striated muscle cell differentiation"/>
    <property type="evidence" value="ECO:0007669"/>
    <property type="project" value="Ensembl"/>
</dbReference>
<dbReference type="CDD" id="cd04368">
    <property type="entry name" value="IlGF"/>
    <property type="match status" value="1"/>
</dbReference>
<dbReference type="FunFam" id="1.10.100.10:FF:000002">
    <property type="entry name" value="Insulin-like growth factor II preproprotein"/>
    <property type="match status" value="1"/>
</dbReference>
<dbReference type="Gene3D" id="1.10.100.10">
    <property type="entry name" value="Insulin-like"/>
    <property type="match status" value="1"/>
</dbReference>
<dbReference type="InterPro" id="IPR022334">
    <property type="entry name" value="IGF2"/>
</dbReference>
<dbReference type="InterPro" id="IPR013576">
    <property type="entry name" value="IGF2_C"/>
</dbReference>
<dbReference type="InterPro" id="IPR016179">
    <property type="entry name" value="Insulin-like"/>
</dbReference>
<dbReference type="InterPro" id="IPR022350">
    <property type="entry name" value="Insulin-like_growth_factor"/>
</dbReference>
<dbReference type="InterPro" id="IPR036438">
    <property type="entry name" value="Insulin-like_sf"/>
</dbReference>
<dbReference type="InterPro" id="IPR022353">
    <property type="entry name" value="Insulin_CS"/>
</dbReference>
<dbReference type="InterPro" id="IPR022352">
    <property type="entry name" value="Insulin_family"/>
</dbReference>
<dbReference type="PANTHER" id="PTHR46886">
    <property type="entry name" value="INSULIN-LIKE GROWTH FACTOR II"/>
    <property type="match status" value="1"/>
</dbReference>
<dbReference type="PANTHER" id="PTHR46886:SF1">
    <property type="entry name" value="INSULIN-LIKE GROWTH FACTOR II"/>
    <property type="match status" value="1"/>
</dbReference>
<dbReference type="Pfam" id="PF08365">
    <property type="entry name" value="IGF2_C"/>
    <property type="match status" value="1"/>
</dbReference>
<dbReference type="Pfam" id="PF00049">
    <property type="entry name" value="Insulin"/>
    <property type="match status" value="1"/>
</dbReference>
<dbReference type="PRINTS" id="PR02002">
    <property type="entry name" value="INSLNLIKEGF"/>
</dbReference>
<dbReference type="PRINTS" id="PR02006">
    <property type="entry name" value="INSLNLIKEGF2"/>
</dbReference>
<dbReference type="PRINTS" id="PR00276">
    <property type="entry name" value="INSULINFAMLY"/>
</dbReference>
<dbReference type="SMART" id="SM00078">
    <property type="entry name" value="IlGF"/>
    <property type="match status" value="1"/>
</dbReference>
<dbReference type="SUPFAM" id="SSF56994">
    <property type="entry name" value="Insulin-like"/>
    <property type="match status" value="1"/>
</dbReference>
<dbReference type="PROSITE" id="PS00262">
    <property type="entry name" value="INSULIN"/>
    <property type="match status" value="1"/>
</dbReference>
<sequence>MGIPMGKSMLVLLTFLAFASCCIAAYRPSETLCGGELVDTLQFVCGDRGFYFSRPASRVSRRSRGIVEECCFRSCDLALLETYCATPAKSERDVSTPPTVLPDNFPRYPVGKFFQYDTWKQSTQRLRRGLPALLRARRGHVLAKELEAFREAKRHRPLIALPTQDPAHGGAPPEMASNRK</sequence>
<evidence type="ECO:0000250" key="1">
    <source>
        <dbReference type="UniProtKB" id="P09535"/>
    </source>
</evidence>
<evidence type="ECO:0000256" key="2">
    <source>
        <dbReference type="SAM" id="MobiDB-lite"/>
    </source>
</evidence>
<evidence type="ECO:0000269" key="3">
    <source>
    </source>
</evidence>
<evidence type="ECO:0000269" key="4">
    <source>
    </source>
</evidence>
<evidence type="ECO:0000269" key="5">
    <source>
    </source>
</evidence>
<evidence type="ECO:0000269" key="6">
    <source>
    </source>
</evidence>
<evidence type="ECO:0000269" key="7">
    <source>
    </source>
</evidence>
<evidence type="ECO:0000269" key="8">
    <source>
    </source>
</evidence>
<evidence type="ECO:0000269" key="9">
    <source>
    </source>
</evidence>
<evidence type="ECO:0000269" key="10">
    <source>
    </source>
</evidence>
<evidence type="ECO:0000269" key="11">
    <source>
    </source>
</evidence>
<evidence type="ECO:0000269" key="12">
    <source>
    </source>
</evidence>
<evidence type="ECO:0000269" key="13">
    <source>
    </source>
</evidence>
<evidence type="ECO:0000269" key="14">
    <source>
    </source>
</evidence>
<evidence type="ECO:0000269" key="15">
    <source>
    </source>
</evidence>
<evidence type="ECO:0000269" key="16">
    <source>
    </source>
</evidence>
<evidence type="ECO:0000269" key="17">
    <source>
    </source>
</evidence>
<evidence type="ECO:0000269" key="18">
    <source>
    </source>
</evidence>
<evidence type="ECO:0000269" key="19">
    <source>
    </source>
</evidence>
<evidence type="ECO:0000269" key="20">
    <source>
    </source>
</evidence>
<evidence type="ECO:0000303" key="21">
    <source>
    </source>
</evidence>
<evidence type="ECO:0000303" key="22">
    <source>
    </source>
</evidence>
<evidence type="ECO:0000303" key="23">
    <source>
    </source>
</evidence>
<evidence type="ECO:0000303" key="24">
    <source>
    </source>
</evidence>
<evidence type="ECO:0000303" key="25">
    <source>
    </source>
</evidence>
<evidence type="ECO:0000303" key="26">
    <source>
    </source>
</evidence>
<evidence type="ECO:0000305" key="27"/>
<evidence type="ECO:0000305" key="28">
    <source>
    </source>
</evidence>
<evidence type="ECO:0000305" key="29">
    <source>
    </source>
</evidence>
<evidence type="ECO:0000312" key="30">
    <source>
        <dbReference type="HGNC" id="HGNC:5466"/>
    </source>
</evidence>
<evidence type="ECO:0007829" key="31">
    <source>
        <dbReference type="PDB" id="1IGL"/>
    </source>
</evidence>
<evidence type="ECO:0007829" key="32">
    <source>
        <dbReference type="PDB" id="3KR3"/>
    </source>
</evidence>
<proteinExistence type="evidence at protein level"/>
<accession>P01344</accession>
<accession>B3KX48</accession>
<accession>B7WP08</accession>
<accession>C9JAF2</accession>
<accession>E3UN45</accession>
<accession>P78449</accession>
<accession>Q14299</accession>
<accession>Q1WM26</accession>
<accession>Q9UC68</accession>
<accession>Q9UC69</accession>
<protein>
    <recommendedName>
        <fullName evidence="30">Insulin-like growth factor 2</fullName>
    </recommendedName>
    <alternativeName>
        <fullName evidence="26">Insulin-like growth factor II</fullName>
        <shortName evidence="25">IGF-II</shortName>
    </alternativeName>
    <alternativeName>
        <fullName>Somatomedin-A</fullName>
    </alternativeName>
    <alternativeName>
        <fullName>T3M-11-derived growth factor</fullName>
    </alternativeName>
    <component>
        <recommendedName>
            <fullName>Insulin-like growth factor II Ala-25 Del</fullName>
        </recommendedName>
    </component>
    <component>
        <recommendedName>
            <fullName evidence="22">Preptin</fullName>
        </recommendedName>
    </component>
</protein>